<sequence length="184" mass="19610">MMTEGAARRVHIIQGEYKVLSDPNAVLSTILGSCVAACLRDPVAGIGGMNHFLLPGSATSPTSGGDATRYGVHLMELLINGLLKQGARRDRLEAKIFGGAKTISTFSNVGEQNAAFAMQFLRDEGIPVVGSSTGGDHGRKLEFWPVSGRARQYPLTGAETQRTVALEQRPAAPPKPVETSIEFF</sequence>
<feature type="chain" id="PRO_1000145894" description="Probable chemoreceptor glutamine deamidase CheD">
    <location>
        <begin position="1"/>
        <end position="184"/>
    </location>
</feature>
<comment type="function">
    <text evidence="1">Probably deamidates glutamine residues to glutamate on methyl-accepting chemotaxis receptors (MCPs), playing an important role in chemotaxis.</text>
</comment>
<comment type="catalytic activity">
    <reaction evidence="1">
        <text>L-glutaminyl-[protein] + H2O = L-glutamyl-[protein] + NH4(+)</text>
        <dbReference type="Rhea" id="RHEA:16441"/>
        <dbReference type="Rhea" id="RHEA-COMP:10207"/>
        <dbReference type="Rhea" id="RHEA-COMP:10208"/>
        <dbReference type="ChEBI" id="CHEBI:15377"/>
        <dbReference type="ChEBI" id="CHEBI:28938"/>
        <dbReference type="ChEBI" id="CHEBI:29973"/>
        <dbReference type="ChEBI" id="CHEBI:30011"/>
        <dbReference type="EC" id="3.5.1.44"/>
    </reaction>
</comment>
<comment type="similarity">
    <text evidence="1">Belongs to the CheD family.</text>
</comment>
<accession>B5ZQC1</accession>
<proteinExistence type="inferred from homology"/>
<gene>
    <name evidence="1" type="primary">cheD</name>
    <name type="ordered locus">Rleg2_0303</name>
</gene>
<organism>
    <name type="scientific">Rhizobium leguminosarum bv. trifolii (strain WSM2304)</name>
    <dbReference type="NCBI Taxonomy" id="395492"/>
    <lineage>
        <taxon>Bacteria</taxon>
        <taxon>Pseudomonadati</taxon>
        <taxon>Pseudomonadota</taxon>
        <taxon>Alphaproteobacteria</taxon>
        <taxon>Hyphomicrobiales</taxon>
        <taxon>Rhizobiaceae</taxon>
        <taxon>Rhizobium/Agrobacterium group</taxon>
        <taxon>Rhizobium</taxon>
    </lineage>
</organism>
<reference key="1">
    <citation type="journal article" date="2010" name="Stand. Genomic Sci.">
        <title>Complete genome sequence of Rhizobium leguminosarum bv trifolii strain WSM2304, an effective microsymbiont of the South American clover Trifolium polymorphum.</title>
        <authorList>
            <person name="Reeve W."/>
            <person name="O'Hara G."/>
            <person name="Chain P."/>
            <person name="Ardley J."/>
            <person name="Brau L."/>
            <person name="Nandesena K."/>
            <person name="Tiwari R."/>
            <person name="Malfatti S."/>
            <person name="Kiss H."/>
            <person name="Lapidus A."/>
            <person name="Copeland A."/>
            <person name="Nolan M."/>
            <person name="Land M."/>
            <person name="Ivanova N."/>
            <person name="Mavromatis K."/>
            <person name="Markowitz V."/>
            <person name="Kyrpides N."/>
            <person name="Melino V."/>
            <person name="Denton M."/>
            <person name="Yates R."/>
            <person name="Howieson J."/>
        </authorList>
    </citation>
    <scope>NUCLEOTIDE SEQUENCE [LARGE SCALE GENOMIC DNA]</scope>
    <source>
        <strain>WSM2304</strain>
    </source>
</reference>
<keyword id="KW-0145">Chemotaxis</keyword>
<keyword id="KW-0378">Hydrolase</keyword>
<keyword id="KW-1185">Reference proteome</keyword>
<dbReference type="EC" id="3.5.1.44" evidence="1"/>
<dbReference type="EMBL" id="CP001191">
    <property type="protein sequence ID" value="ACI53602.1"/>
    <property type="molecule type" value="Genomic_DNA"/>
</dbReference>
<dbReference type="RefSeq" id="WP_003588575.1">
    <property type="nucleotide sequence ID" value="NC_011369.1"/>
</dbReference>
<dbReference type="SMR" id="B5ZQC1"/>
<dbReference type="STRING" id="395492.Rleg2_0303"/>
<dbReference type="KEGG" id="rlt:Rleg2_0303"/>
<dbReference type="eggNOG" id="COG1871">
    <property type="taxonomic scope" value="Bacteria"/>
</dbReference>
<dbReference type="HOGENOM" id="CLU_087854_0_1_5"/>
<dbReference type="Proteomes" id="UP000008330">
    <property type="component" value="Chromosome"/>
</dbReference>
<dbReference type="GO" id="GO:0050568">
    <property type="term" value="F:protein-glutamine glutaminase activity"/>
    <property type="evidence" value="ECO:0007669"/>
    <property type="project" value="UniProtKB-UniRule"/>
</dbReference>
<dbReference type="GO" id="GO:0006935">
    <property type="term" value="P:chemotaxis"/>
    <property type="evidence" value="ECO:0007669"/>
    <property type="project" value="UniProtKB-UniRule"/>
</dbReference>
<dbReference type="CDD" id="cd16352">
    <property type="entry name" value="CheD"/>
    <property type="match status" value="1"/>
</dbReference>
<dbReference type="FunFam" id="3.30.1330.200:FF:000001">
    <property type="entry name" value="Probable chemoreceptor glutamine deamidase CheD"/>
    <property type="match status" value="1"/>
</dbReference>
<dbReference type="Gene3D" id="3.30.1330.200">
    <property type="match status" value="1"/>
</dbReference>
<dbReference type="HAMAP" id="MF_01440">
    <property type="entry name" value="CheD"/>
    <property type="match status" value="1"/>
</dbReference>
<dbReference type="InterPro" id="IPR038592">
    <property type="entry name" value="CheD-like_sf"/>
</dbReference>
<dbReference type="InterPro" id="IPR005659">
    <property type="entry name" value="Chemorcpt_Glu_NH3ase_CheD"/>
</dbReference>
<dbReference type="InterPro" id="IPR011324">
    <property type="entry name" value="Cytotoxic_necrot_fac-like_cat"/>
</dbReference>
<dbReference type="NCBIfam" id="NF010019">
    <property type="entry name" value="PRK13497.1"/>
    <property type="match status" value="1"/>
</dbReference>
<dbReference type="PANTHER" id="PTHR35147">
    <property type="entry name" value="CHEMORECEPTOR GLUTAMINE DEAMIDASE CHED-RELATED"/>
    <property type="match status" value="1"/>
</dbReference>
<dbReference type="PANTHER" id="PTHR35147:SF2">
    <property type="entry name" value="CHEMORECEPTOR GLUTAMINE DEAMIDASE CHED-RELATED"/>
    <property type="match status" value="1"/>
</dbReference>
<dbReference type="Pfam" id="PF03975">
    <property type="entry name" value="CheD"/>
    <property type="match status" value="1"/>
</dbReference>
<dbReference type="SUPFAM" id="SSF64438">
    <property type="entry name" value="CNF1/YfiH-like putative cysteine hydrolases"/>
    <property type="match status" value="1"/>
</dbReference>
<evidence type="ECO:0000255" key="1">
    <source>
        <dbReference type="HAMAP-Rule" id="MF_01440"/>
    </source>
</evidence>
<protein>
    <recommendedName>
        <fullName evidence="1">Probable chemoreceptor glutamine deamidase CheD</fullName>
        <ecNumber evidence="1">3.5.1.44</ecNumber>
    </recommendedName>
</protein>
<name>CHED_RHILW</name>